<proteinExistence type="evidence at transcript level"/>
<evidence type="ECO:0000250" key="1"/>
<evidence type="ECO:0000250" key="2">
    <source>
        <dbReference type="UniProtKB" id="O54915"/>
    </source>
</evidence>
<evidence type="ECO:0000250" key="3">
    <source>
        <dbReference type="UniProtKB" id="O75469"/>
    </source>
</evidence>
<evidence type="ECO:0000255" key="4">
    <source>
        <dbReference type="PROSITE-ProRule" id="PRU00407"/>
    </source>
</evidence>
<evidence type="ECO:0000255" key="5">
    <source>
        <dbReference type="PROSITE-ProRule" id="PRU01189"/>
    </source>
</evidence>
<evidence type="ECO:0000305" key="6"/>
<reference key="1">
    <citation type="journal article" date="2002" name="Mol. Endocrinol.">
        <title>Pregnane X receptor (PXR), constitutive androstane receptor (CAR), and benzoate X receptor (BXR) define three pharmacologically distinct classes of nuclear receptors.</title>
        <authorList>
            <person name="Moore L.B."/>
            <person name="Maglich J.M."/>
            <person name="McKee D.D."/>
            <person name="Wisely B."/>
            <person name="Willson T.M."/>
            <person name="Kliewer S.A."/>
            <person name="Lambert M.H."/>
            <person name="Moore J.T."/>
        </authorList>
    </citation>
    <scope>NUCLEOTIDE SEQUENCE [MRNA]</scope>
</reference>
<comment type="function">
    <text evidence="1">Nuclear receptor that binds and is activated by a variety of endogenous and xenobiotic compounds. Transcription factor that activates the transcription of multiple genes involved in the metabolism and secretion of potentially harmful xenobiotics, endogenous compounds and drugs. Response to specific ligands is species-specific, due to differences in the ligand-binding domain. Activated by naturally occurring steroids, such as pregnenolone and progesterone. Binds to a response element in the promoters of the CYP3A4 and ABCB1/MDR1 genes (By similarity).</text>
</comment>
<comment type="subunit">
    <text evidence="2 3">Heterodimer with RXRA (By similarity). Interacts with NCOA1 (By similarity). Interacts (via domain NR LBD) with CRY1 and CRY2 in a ligand-dependent manner (By similarity).</text>
</comment>
<comment type="subcellular location">
    <subcellularLocation>
        <location evidence="4">Nucleus</location>
    </subcellularLocation>
</comment>
<comment type="similarity">
    <text evidence="6">Belongs to the nuclear hormone receptor family. NR1 subfamily.</text>
</comment>
<accession>Q8SQ01</accession>
<keyword id="KW-0010">Activator</keyword>
<keyword id="KW-0238">DNA-binding</keyword>
<keyword id="KW-0479">Metal-binding</keyword>
<keyword id="KW-0539">Nucleus</keyword>
<keyword id="KW-0675">Receptor</keyword>
<keyword id="KW-1185">Reference proteome</keyword>
<keyword id="KW-0804">Transcription</keyword>
<keyword id="KW-0805">Transcription regulation</keyword>
<keyword id="KW-0862">Zinc</keyword>
<keyword id="KW-0863">Zinc-finger</keyword>
<gene>
    <name type="primary">NR1I2</name>
    <name type="synonym">PXR</name>
</gene>
<protein>
    <recommendedName>
        <fullName>Nuclear receptor subfamily 1 group I member 2</fullName>
    </recommendedName>
    <alternativeName>
        <fullName>Orphan nuclear receptor PXR</fullName>
    </alternativeName>
    <alternativeName>
        <fullName>Pregnane X receptor</fullName>
    </alternativeName>
</protein>
<dbReference type="EMBL" id="AF454671">
    <property type="protein sequence ID" value="AAM10633.1"/>
    <property type="molecule type" value="mRNA"/>
</dbReference>
<dbReference type="RefSeq" id="NP_001028054.3">
    <property type="nucleotide sequence ID" value="NM_001032882.3"/>
</dbReference>
<dbReference type="SMR" id="Q8SQ01"/>
<dbReference type="FunCoup" id="Q8SQ01">
    <property type="interactions" value="324"/>
</dbReference>
<dbReference type="STRING" id="9544.ENSMMUP00000002638"/>
<dbReference type="PaxDb" id="9544-ENSMMUP00000002638"/>
<dbReference type="GeneID" id="574226"/>
<dbReference type="KEGG" id="mcc:574226"/>
<dbReference type="CTD" id="8856"/>
<dbReference type="eggNOG" id="KOG3575">
    <property type="taxonomic scope" value="Eukaryota"/>
</dbReference>
<dbReference type="InParanoid" id="Q8SQ01"/>
<dbReference type="OrthoDB" id="6355676at2759"/>
<dbReference type="Proteomes" id="UP000006718">
    <property type="component" value="Unassembled WGS sequence"/>
</dbReference>
<dbReference type="GO" id="GO:0000785">
    <property type="term" value="C:chromatin"/>
    <property type="evidence" value="ECO:0000318"/>
    <property type="project" value="GO_Central"/>
</dbReference>
<dbReference type="GO" id="GO:0005654">
    <property type="term" value="C:nucleoplasm"/>
    <property type="evidence" value="ECO:0007669"/>
    <property type="project" value="UniProtKB-ARBA"/>
</dbReference>
<dbReference type="GO" id="GO:0005634">
    <property type="term" value="C:nucleus"/>
    <property type="evidence" value="ECO:0000318"/>
    <property type="project" value="GO_Central"/>
</dbReference>
<dbReference type="GO" id="GO:0034056">
    <property type="term" value="F:estrogen response element binding"/>
    <property type="evidence" value="ECO:0000318"/>
    <property type="project" value="GO_Central"/>
</dbReference>
<dbReference type="GO" id="GO:0004879">
    <property type="term" value="F:nuclear receptor activity"/>
    <property type="evidence" value="ECO:0000250"/>
    <property type="project" value="UniProtKB"/>
</dbReference>
<dbReference type="GO" id="GO:0008270">
    <property type="term" value="F:zinc ion binding"/>
    <property type="evidence" value="ECO:0007669"/>
    <property type="project" value="UniProtKB-KW"/>
</dbReference>
<dbReference type="GO" id="GO:0045893">
    <property type="term" value="P:positive regulation of DNA-templated transcription"/>
    <property type="evidence" value="ECO:0000250"/>
    <property type="project" value="UniProtKB"/>
</dbReference>
<dbReference type="GO" id="GO:0006357">
    <property type="term" value="P:regulation of transcription by RNA polymerase II"/>
    <property type="evidence" value="ECO:0000318"/>
    <property type="project" value="GO_Central"/>
</dbReference>
<dbReference type="GO" id="GO:0042178">
    <property type="term" value="P:xenobiotic catabolic process"/>
    <property type="evidence" value="ECO:0000250"/>
    <property type="project" value="UniProtKB"/>
</dbReference>
<dbReference type="GO" id="GO:0006805">
    <property type="term" value="P:xenobiotic metabolic process"/>
    <property type="evidence" value="ECO:0000250"/>
    <property type="project" value="UniProtKB"/>
</dbReference>
<dbReference type="GO" id="GO:0042908">
    <property type="term" value="P:xenobiotic transport"/>
    <property type="evidence" value="ECO:0000250"/>
    <property type="project" value="UniProtKB"/>
</dbReference>
<dbReference type="CDD" id="cd06934">
    <property type="entry name" value="NR_LBD_PXR_like"/>
    <property type="match status" value="1"/>
</dbReference>
<dbReference type="FunFam" id="1.10.565.10:FF:000024">
    <property type="entry name" value="Nuclear receptor subfamily 1 group I member 2"/>
    <property type="match status" value="1"/>
</dbReference>
<dbReference type="FunFam" id="3.30.50.10:FF:000033">
    <property type="entry name" value="Nuclear receptor subfamily 1 group I member 2"/>
    <property type="match status" value="1"/>
</dbReference>
<dbReference type="Gene3D" id="3.30.50.10">
    <property type="entry name" value="Erythroid Transcription Factor GATA-1, subunit A"/>
    <property type="match status" value="1"/>
</dbReference>
<dbReference type="Gene3D" id="1.10.565.10">
    <property type="entry name" value="Retinoid X Receptor"/>
    <property type="match status" value="1"/>
</dbReference>
<dbReference type="InterPro" id="IPR035500">
    <property type="entry name" value="NHR-like_dom_sf"/>
</dbReference>
<dbReference type="InterPro" id="IPR000536">
    <property type="entry name" value="Nucl_hrmn_rcpt_lig-bd"/>
</dbReference>
<dbReference type="InterPro" id="IPR050234">
    <property type="entry name" value="Nuclear_hormone_rcpt_NR1"/>
</dbReference>
<dbReference type="InterPro" id="IPR001723">
    <property type="entry name" value="Nuclear_hrmn_rcpt"/>
</dbReference>
<dbReference type="InterPro" id="IPR001628">
    <property type="entry name" value="Znf_hrmn_rcpt"/>
</dbReference>
<dbReference type="InterPro" id="IPR013088">
    <property type="entry name" value="Znf_NHR/GATA"/>
</dbReference>
<dbReference type="PANTHER" id="PTHR24082">
    <property type="entry name" value="NUCLEAR HORMONE RECEPTOR"/>
    <property type="match status" value="1"/>
</dbReference>
<dbReference type="PANTHER" id="PTHR24082:SF39">
    <property type="entry name" value="NUCLEAR RECEPTOR SUBFAMILY 1 GROUP I MEMBER 2"/>
    <property type="match status" value="1"/>
</dbReference>
<dbReference type="Pfam" id="PF00104">
    <property type="entry name" value="Hormone_recep"/>
    <property type="match status" value="1"/>
</dbReference>
<dbReference type="Pfam" id="PF00105">
    <property type="entry name" value="zf-C4"/>
    <property type="match status" value="1"/>
</dbReference>
<dbReference type="PRINTS" id="PR00398">
    <property type="entry name" value="STRDHORMONER"/>
</dbReference>
<dbReference type="PRINTS" id="PR00047">
    <property type="entry name" value="STROIDFINGER"/>
</dbReference>
<dbReference type="SMART" id="SM00430">
    <property type="entry name" value="HOLI"/>
    <property type="match status" value="1"/>
</dbReference>
<dbReference type="SMART" id="SM00399">
    <property type="entry name" value="ZnF_C4"/>
    <property type="match status" value="1"/>
</dbReference>
<dbReference type="SUPFAM" id="SSF57716">
    <property type="entry name" value="Glucocorticoid receptor-like (DNA-binding domain)"/>
    <property type="match status" value="1"/>
</dbReference>
<dbReference type="SUPFAM" id="SSF48508">
    <property type="entry name" value="Nuclear receptor ligand-binding domain"/>
    <property type="match status" value="1"/>
</dbReference>
<dbReference type="PROSITE" id="PS51843">
    <property type="entry name" value="NR_LBD"/>
    <property type="match status" value="1"/>
</dbReference>
<dbReference type="PROSITE" id="PS00031">
    <property type="entry name" value="NUCLEAR_REC_DBD_1"/>
    <property type="match status" value="1"/>
</dbReference>
<dbReference type="PROSITE" id="PS51030">
    <property type="entry name" value="NUCLEAR_REC_DBD_2"/>
    <property type="match status" value="1"/>
</dbReference>
<sequence>MEVRPKEGWNHADFVYCEDTEFAPGKPTVNADEEVGGPQICRVCGDKATGYHFNVMTCEGCKGFFRRAMKRNARLRCPFRKGACEITRKTRRQCQACRLRKCLESGMKKEMIMSDAAVEERRALIKRKKRERIGTQPPGVQGLTEEQRMMIRELMDAQMKTFDTTFSHFKNFRLPGVLSSGCEMPESLQAPSREEAAKWNQVRKDLWSVKVSVQLRGEDGSVWNYKPPADNGGKEIFSLLPHMADMSTYMFKGIINFAKVISYFRDLPIEDQISLLKGATFELCQLRFNTVFNAETGTWECGRLSYCLEDPAGGFQQLLLEPMLKFHYMLKKLQLHEEEYVLMQAISLFSPDRPGVVQHRVVDQLQEQYAITLKSYIECNRPQPAHRFLFLKIMAMLTELRSINAQHTQRLLRIQDIHPFATPLMQELFGITGS</sequence>
<feature type="chain" id="PRO_0000053548" description="Nuclear receptor subfamily 1 group I member 2">
    <location>
        <begin position="1"/>
        <end position="434"/>
    </location>
</feature>
<feature type="domain" description="NR LBD" evidence="5">
    <location>
        <begin position="146"/>
        <end position="433"/>
    </location>
</feature>
<feature type="DNA-binding region" description="Nuclear receptor" evidence="4">
    <location>
        <begin position="38"/>
        <end position="107"/>
    </location>
</feature>
<feature type="zinc finger region" description="NR C4-type" evidence="4">
    <location>
        <begin position="41"/>
        <end position="61"/>
    </location>
</feature>
<feature type="zinc finger region" description="NR C4-type" evidence="4">
    <location>
        <begin position="77"/>
        <end position="102"/>
    </location>
</feature>
<feature type="region of interest" description="Hinge" evidence="1">
    <location>
        <begin position="108"/>
        <end position="145"/>
    </location>
</feature>
<feature type="short sequence motif" description="Bipartite nuclear localization signal" evidence="1">
    <location>
        <begin position="66"/>
        <end position="92"/>
    </location>
</feature>
<feature type="binding site" evidence="3">
    <location>
        <position position="247"/>
    </location>
    <ligand>
        <name>hyperforin</name>
        <dbReference type="ChEBI" id="CHEBI:5834"/>
        <note>agonist</note>
    </ligand>
</feature>
<feature type="binding site" evidence="3">
    <location>
        <begin position="285"/>
        <end position="288"/>
    </location>
    <ligand>
        <name>hyperforin</name>
        <dbReference type="ChEBI" id="CHEBI:5834"/>
        <note>agonist</note>
    </ligand>
</feature>
<feature type="binding site" evidence="3">
    <location>
        <position position="407"/>
    </location>
    <ligand>
        <name>hyperforin</name>
        <dbReference type="ChEBI" id="CHEBI:5834"/>
        <note>agonist</note>
    </ligand>
</feature>
<name>NR1I2_MACMU</name>
<organism>
    <name type="scientific">Macaca mulatta</name>
    <name type="common">Rhesus macaque</name>
    <dbReference type="NCBI Taxonomy" id="9544"/>
    <lineage>
        <taxon>Eukaryota</taxon>
        <taxon>Metazoa</taxon>
        <taxon>Chordata</taxon>
        <taxon>Craniata</taxon>
        <taxon>Vertebrata</taxon>
        <taxon>Euteleostomi</taxon>
        <taxon>Mammalia</taxon>
        <taxon>Eutheria</taxon>
        <taxon>Euarchontoglires</taxon>
        <taxon>Primates</taxon>
        <taxon>Haplorrhini</taxon>
        <taxon>Catarrhini</taxon>
        <taxon>Cercopithecidae</taxon>
        <taxon>Cercopithecinae</taxon>
        <taxon>Macaca</taxon>
    </lineage>
</organism>